<comment type="function">
    <text evidence="1">One of the components of the core complex of photosystem II (PSII), required for its stability and/or assembly. PSII is a light-driven water:plastoquinone oxidoreductase that uses light energy to abstract electrons from H(2)O, generating O(2) and a proton gradient subsequently used for ATP formation. It consists of a core antenna complex that captures photons, and an electron transfer chain that converts photonic excitation into a charge separation.</text>
</comment>
<comment type="subunit">
    <text evidence="1">PSII is composed of 1 copy each of membrane proteins PsbA, PsbB, PsbC, PsbD, PsbE, PsbF, PsbH, PsbI, PsbJ, PsbK, PsbL, PsbM, PsbT, PsbX, PsbY, PsbZ, Psb30/Ycf12, peripheral proteins PsbO, CyanoQ (PsbQ), PsbU, PsbV and a large number of cofactors. It forms dimeric complexes.</text>
</comment>
<comment type="subcellular location">
    <subcellularLocation>
        <location evidence="1">Cellular thylakoid membrane</location>
        <topology evidence="1">Single-pass membrane protein</topology>
    </subcellularLocation>
</comment>
<comment type="similarity">
    <text evidence="1">Belongs to the PsbH family.</text>
</comment>
<sequence length="67" mass="7620">MAQRTRLGDILRPLNSEYGKVAPGWGTTPVMGVFMLLFFVFLLIILQIYNSSLVLDTFKVDWRSLGL</sequence>
<organism>
    <name type="scientific">Synechococcus elongatus (strain ATCC 33912 / PCC 7942 / FACHB-805)</name>
    <name type="common">Anacystis nidulans R2</name>
    <dbReference type="NCBI Taxonomy" id="1140"/>
    <lineage>
        <taxon>Bacteria</taxon>
        <taxon>Bacillati</taxon>
        <taxon>Cyanobacteriota</taxon>
        <taxon>Cyanophyceae</taxon>
        <taxon>Synechococcales</taxon>
        <taxon>Synechococcaceae</taxon>
        <taxon>Synechococcus</taxon>
    </lineage>
</organism>
<proteinExistence type="inferred from homology"/>
<dbReference type="EMBL" id="CP000100">
    <property type="protein sequence ID" value="ABB56257.1"/>
    <property type="molecule type" value="Genomic_DNA"/>
</dbReference>
<dbReference type="RefSeq" id="WP_011243600.1">
    <property type="nucleotide sequence ID" value="NZ_JACJTX010000002.1"/>
</dbReference>
<dbReference type="SMR" id="Q31RR2"/>
<dbReference type="STRING" id="1140.Synpcc7942_0225"/>
<dbReference type="PaxDb" id="1140-Synpcc7942_0225"/>
<dbReference type="GeneID" id="72429039"/>
<dbReference type="KEGG" id="syf:Synpcc7942_0225"/>
<dbReference type="eggNOG" id="ENOG50332MV">
    <property type="taxonomic scope" value="Bacteria"/>
</dbReference>
<dbReference type="HOGENOM" id="CLU_190203_0_0_3"/>
<dbReference type="OrthoDB" id="427121at2"/>
<dbReference type="BioCyc" id="MetaCyc:SYNPCC7942_0225-MONOMER"/>
<dbReference type="BioCyc" id="SYNEL:SYNPCC7942_0225-MONOMER"/>
<dbReference type="Proteomes" id="UP000889800">
    <property type="component" value="Chromosome"/>
</dbReference>
<dbReference type="GO" id="GO:0009523">
    <property type="term" value="C:photosystem II"/>
    <property type="evidence" value="ECO:0007669"/>
    <property type="project" value="UniProtKB-KW"/>
</dbReference>
<dbReference type="GO" id="GO:0031676">
    <property type="term" value="C:plasma membrane-derived thylakoid membrane"/>
    <property type="evidence" value="ECO:0007669"/>
    <property type="project" value="UniProtKB-SubCell"/>
</dbReference>
<dbReference type="GO" id="GO:0042301">
    <property type="term" value="F:phosphate ion binding"/>
    <property type="evidence" value="ECO:0007669"/>
    <property type="project" value="InterPro"/>
</dbReference>
<dbReference type="GO" id="GO:0015979">
    <property type="term" value="P:photosynthesis"/>
    <property type="evidence" value="ECO:0007669"/>
    <property type="project" value="UniProtKB-UniRule"/>
</dbReference>
<dbReference type="GO" id="GO:0050821">
    <property type="term" value="P:protein stabilization"/>
    <property type="evidence" value="ECO:0007669"/>
    <property type="project" value="InterPro"/>
</dbReference>
<dbReference type="Gene3D" id="1.20.5.880">
    <property type="entry name" value="Photosystem II reaction center protein H"/>
    <property type="match status" value="1"/>
</dbReference>
<dbReference type="HAMAP" id="MF_00752">
    <property type="entry name" value="PSII_PsbH"/>
    <property type="match status" value="1"/>
</dbReference>
<dbReference type="InterPro" id="IPR001056">
    <property type="entry name" value="PSII_PsbH"/>
</dbReference>
<dbReference type="InterPro" id="IPR036863">
    <property type="entry name" value="PSII_PsbH_sf"/>
</dbReference>
<dbReference type="NCBIfam" id="NF002728">
    <property type="entry name" value="PRK02624.1"/>
    <property type="match status" value="1"/>
</dbReference>
<dbReference type="PANTHER" id="PTHR34469">
    <property type="entry name" value="PHOTOSYSTEM II REACTION CENTER PROTEIN H"/>
    <property type="match status" value="1"/>
</dbReference>
<dbReference type="PANTHER" id="PTHR34469:SF4">
    <property type="entry name" value="PHOTOSYSTEM II REACTION CENTER PROTEIN H"/>
    <property type="match status" value="1"/>
</dbReference>
<dbReference type="Pfam" id="PF00737">
    <property type="entry name" value="PsbH"/>
    <property type="match status" value="1"/>
</dbReference>
<dbReference type="SUPFAM" id="SSF161025">
    <property type="entry name" value="Photosystem II 10 kDa phosphoprotein PsbH"/>
    <property type="match status" value="1"/>
</dbReference>
<reference key="1">
    <citation type="submission" date="2005-08" db="EMBL/GenBank/DDBJ databases">
        <title>Complete sequence of chromosome 1 of Synechococcus elongatus PCC 7942.</title>
        <authorList>
            <consortium name="US DOE Joint Genome Institute"/>
            <person name="Copeland A."/>
            <person name="Lucas S."/>
            <person name="Lapidus A."/>
            <person name="Barry K."/>
            <person name="Detter J.C."/>
            <person name="Glavina T."/>
            <person name="Hammon N."/>
            <person name="Israni S."/>
            <person name="Pitluck S."/>
            <person name="Schmutz J."/>
            <person name="Larimer F."/>
            <person name="Land M."/>
            <person name="Kyrpides N."/>
            <person name="Lykidis A."/>
            <person name="Golden S."/>
            <person name="Richardson P."/>
        </authorList>
    </citation>
    <scope>NUCLEOTIDE SEQUENCE [LARGE SCALE GENOMIC DNA]</scope>
    <source>
        <strain>ATCC 33912 / PCC 7942 / FACHB-805</strain>
    </source>
</reference>
<accession>Q31RR2</accession>
<name>PSBH_SYNE7</name>
<keyword id="KW-0472">Membrane</keyword>
<keyword id="KW-0602">Photosynthesis</keyword>
<keyword id="KW-0604">Photosystem II</keyword>
<keyword id="KW-1185">Reference proteome</keyword>
<keyword id="KW-0793">Thylakoid</keyword>
<keyword id="KW-0812">Transmembrane</keyword>
<keyword id="KW-1133">Transmembrane helix</keyword>
<gene>
    <name evidence="1" type="primary">psbH</name>
    <name type="ordered locus">Synpcc7942_0225</name>
</gene>
<protein>
    <recommendedName>
        <fullName evidence="1">Photosystem II reaction center protein H</fullName>
        <shortName evidence="1">PSII-H</shortName>
    </recommendedName>
</protein>
<evidence type="ECO:0000255" key="1">
    <source>
        <dbReference type="HAMAP-Rule" id="MF_00752"/>
    </source>
</evidence>
<feature type="chain" id="PRO_1000046594" description="Photosystem II reaction center protein H">
    <location>
        <begin position="1"/>
        <end position="67"/>
    </location>
</feature>
<feature type="transmembrane region" description="Helical" evidence="1">
    <location>
        <begin position="29"/>
        <end position="49"/>
    </location>
</feature>